<name>YL406_YEAST</name>
<feature type="signal peptide" evidence="1">
    <location>
        <begin position="1"/>
        <end position="22"/>
    </location>
</feature>
<feature type="chain" id="PRO_0000247217" description="Uncharacterized protein YLR406C-A">
    <location>
        <begin position="23"/>
        <end position="49"/>
    </location>
</feature>
<organism>
    <name type="scientific">Saccharomyces cerevisiae (strain ATCC 204508 / S288c)</name>
    <name type="common">Baker's yeast</name>
    <dbReference type="NCBI Taxonomy" id="559292"/>
    <lineage>
        <taxon>Eukaryota</taxon>
        <taxon>Fungi</taxon>
        <taxon>Dikarya</taxon>
        <taxon>Ascomycota</taxon>
        <taxon>Saccharomycotina</taxon>
        <taxon>Saccharomycetes</taxon>
        <taxon>Saccharomycetales</taxon>
        <taxon>Saccharomycetaceae</taxon>
        <taxon>Saccharomyces</taxon>
    </lineage>
</organism>
<gene>
    <name type="ordered locus">YLR406C-A</name>
</gene>
<reference key="1">
    <citation type="journal article" date="1997" name="Nature">
        <title>The nucleotide sequence of Saccharomyces cerevisiae chromosome XII.</title>
        <authorList>
            <person name="Johnston M."/>
            <person name="Hillier L.W."/>
            <person name="Riles L."/>
            <person name="Albermann K."/>
            <person name="Andre B."/>
            <person name="Ansorge W."/>
            <person name="Benes V."/>
            <person name="Brueckner M."/>
            <person name="Delius H."/>
            <person name="Dubois E."/>
            <person name="Duesterhoeft A."/>
            <person name="Entian K.-D."/>
            <person name="Floeth M."/>
            <person name="Goffeau A."/>
            <person name="Hebling U."/>
            <person name="Heumann K."/>
            <person name="Heuss-Neitzel D."/>
            <person name="Hilbert H."/>
            <person name="Hilger F."/>
            <person name="Kleine K."/>
            <person name="Koetter P."/>
            <person name="Louis E.J."/>
            <person name="Messenguy F."/>
            <person name="Mewes H.-W."/>
            <person name="Miosga T."/>
            <person name="Moestl D."/>
            <person name="Mueller-Auer S."/>
            <person name="Nentwich U."/>
            <person name="Obermaier B."/>
            <person name="Piravandi E."/>
            <person name="Pohl T.M."/>
            <person name="Portetelle D."/>
            <person name="Purnelle B."/>
            <person name="Rechmann S."/>
            <person name="Rieger M."/>
            <person name="Rinke M."/>
            <person name="Rose M."/>
            <person name="Scharfe M."/>
            <person name="Scherens B."/>
            <person name="Scholler P."/>
            <person name="Schwager C."/>
            <person name="Schwarz S."/>
            <person name="Underwood A.P."/>
            <person name="Urrestarazu L.A."/>
            <person name="Vandenbol M."/>
            <person name="Verhasselt P."/>
            <person name="Vierendeels F."/>
            <person name="Voet M."/>
            <person name="Volckaert G."/>
            <person name="Voss H."/>
            <person name="Wambutt R."/>
            <person name="Wedler E."/>
            <person name="Wedler H."/>
            <person name="Zimmermann F.K."/>
            <person name="Zollner A."/>
            <person name="Hani J."/>
            <person name="Hoheisel J.D."/>
        </authorList>
    </citation>
    <scope>NUCLEOTIDE SEQUENCE [LARGE SCALE GENOMIC DNA]</scope>
    <source>
        <strain>ATCC 204508 / S288c</strain>
    </source>
</reference>
<reference key="2">
    <citation type="journal article" date="2014" name="G3 (Bethesda)">
        <title>The reference genome sequence of Saccharomyces cerevisiae: Then and now.</title>
        <authorList>
            <person name="Engel S.R."/>
            <person name="Dietrich F.S."/>
            <person name="Fisk D.G."/>
            <person name="Binkley G."/>
            <person name="Balakrishnan R."/>
            <person name="Costanzo M.C."/>
            <person name="Dwight S.S."/>
            <person name="Hitz B.C."/>
            <person name="Karra K."/>
            <person name="Nash R.S."/>
            <person name="Weng S."/>
            <person name="Wong E.D."/>
            <person name="Lloyd P."/>
            <person name="Skrzypek M.S."/>
            <person name="Miyasato S.R."/>
            <person name="Simison M."/>
            <person name="Cherry J.M."/>
        </authorList>
    </citation>
    <scope>GENOME REANNOTATION</scope>
    <source>
        <strain>ATCC 204508 / S288c</strain>
    </source>
</reference>
<reference key="3">
    <citation type="journal article" date="2002" name="Nat. Biotechnol.">
        <title>An integrated approach for finding overlooked genes in yeast.</title>
        <authorList>
            <person name="Kumar A."/>
            <person name="Harrison P.M."/>
            <person name="Cheung K.-H."/>
            <person name="Lan N."/>
            <person name="Echols N."/>
            <person name="Bertone P."/>
            <person name="Miller P."/>
            <person name="Gerstein M.B."/>
            <person name="Snyder M."/>
        </authorList>
    </citation>
    <scope>NUCLEOTIDE SEQUENCE [GENOMIC DNA]</scope>
</reference>
<evidence type="ECO:0000255" key="1"/>
<proteinExistence type="inferred from homology"/>
<sequence>MIQKPILLSSFLFLYIRALLHSIHPYIRTSVHLYTKKITSYNFLGVPFK</sequence>
<keyword id="KW-1185">Reference proteome</keyword>
<keyword id="KW-0732">Signal</keyword>
<accession>Q8TGT1</accession>
<accession>D6VZ40</accession>
<protein>
    <recommendedName>
        <fullName>Uncharacterized protein YLR406C-A</fullName>
    </recommendedName>
</protein>
<dbReference type="EMBL" id="U19729">
    <property type="status" value="NOT_ANNOTATED_CDS"/>
    <property type="molecule type" value="Genomic_DNA"/>
</dbReference>
<dbReference type="EMBL" id="AF479904">
    <property type="protein sequence ID" value="AAL79217.1"/>
    <property type="molecule type" value="Genomic_DNA"/>
</dbReference>
<dbReference type="EMBL" id="BK006945">
    <property type="protein sequence ID" value="DAA09706.1"/>
    <property type="molecule type" value="Genomic_DNA"/>
</dbReference>
<dbReference type="RefSeq" id="NP_878135.1">
    <property type="nucleotide sequence ID" value="NM_001184610.1"/>
</dbReference>
<dbReference type="BioGRID" id="36965">
    <property type="interactions" value="8"/>
</dbReference>
<dbReference type="FunCoup" id="Q8TGT1">
    <property type="interactions" value="15"/>
</dbReference>
<dbReference type="STRING" id="4932.YLR406C-A"/>
<dbReference type="PaxDb" id="4932-YLR406C-A"/>
<dbReference type="EnsemblFungi" id="YLR406C-A_mRNA">
    <property type="protein sequence ID" value="YLR406C-A"/>
    <property type="gene ID" value="YLR406C-A"/>
</dbReference>
<dbReference type="GeneID" id="1466423"/>
<dbReference type="KEGG" id="sce:YLR406C-A"/>
<dbReference type="AGR" id="SGD:S000028683"/>
<dbReference type="SGD" id="S000028683">
    <property type="gene designation" value="YLR406C-A"/>
</dbReference>
<dbReference type="VEuPathDB" id="FungiDB:YLR406C-A"/>
<dbReference type="HOGENOM" id="CLU_216062_0_0_1"/>
<dbReference type="InParanoid" id="Q8TGT1"/>
<dbReference type="BioCyc" id="YEAST:G3O-32587-MONOMER"/>
<dbReference type="BioGRID-ORCS" id="1466423">
    <property type="hits" value="0 hits in 10 CRISPR screens"/>
</dbReference>
<dbReference type="PRO" id="PR:Q8TGT1"/>
<dbReference type="Proteomes" id="UP000002311">
    <property type="component" value="Chromosome XII"/>
</dbReference>
<dbReference type="GO" id="GO:0000324">
    <property type="term" value="C:fungal-type vacuole"/>
    <property type="evidence" value="ECO:0007005"/>
    <property type="project" value="SGD"/>
</dbReference>